<name>ATPB_LEPBP</name>
<proteinExistence type="inferred from homology"/>
<sequence length="468" mass="51122">MNKGKIKQIIGSVMDISFESGNMPEIYNAVEIQTKVNGKDVTITAEVQQHIGDNTVRAISLQSTDGLKRGLEVTDTGIPISVPVGTKTLGRIFNVLGEAIDELGDLPKDVKKMPIHRNAPTYEEIKPKTEIFETGIKVIDLLAPYIKGGKTGLFGGAGVGKTVLIQELINNIAKQHGGFSVFAGVGERTREGNDLWNEMKESGVIDKTVLCFGQMNEPPGARLRVALSALTMAENFRDESGSDILLFVDNIFRFSQAGSEVSALLGRMPSAVGYQPTLSTEMGGLQERITSTTRGSITSVQAIYVPADDLTDPAPATAFTHLDATTVLSRAISEKGIYPAVDPLDSTSRIMNPQIVGEEHYSTAREVQRILQRYKDLQDIIAILGMDELSEDDKILVARARRLEKFLSQPFHVAEQFTGRPGKYVKLEDTIRSFKGIIEGKYDSLPEQAFYMVGSIDEVIEAAKQLKG</sequence>
<gene>
    <name evidence="1" type="primary">atpD</name>
    <name type="ordered locus">LEPBI_I0807</name>
</gene>
<feature type="chain" id="PRO_1000143521" description="ATP synthase subunit beta">
    <location>
        <begin position="1"/>
        <end position="468"/>
    </location>
</feature>
<feature type="binding site" evidence="1">
    <location>
        <begin position="155"/>
        <end position="162"/>
    </location>
    <ligand>
        <name>ATP</name>
        <dbReference type="ChEBI" id="CHEBI:30616"/>
    </ligand>
</feature>
<keyword id="KW-0066">ATP synthesis</keyword>
<keyword id="KW-0067">ATP-binding</keyword>
<keyword id="KW-0997">Cell inner membrane</keyword>
<keyword id="KW-1003">Cell membrane</keyword>
<keyword id="KW-0139">CF(1)</keyword>
<keyword id="KW-0375">Hydrogen ion transport</keyword>
<keyword id="KW-0406">Ion transport</keyword>
<keyword id="KW-0472">Membrane</keyword>
<keyword id="KW-0547">Nucleotide-binding</keyword>
<keyword id="KW-1185">Reference proteome</keyword>
<keyword id="KW-1278">Translocase</keyword>
<keyword id="KW-0813">Transport</keyword>
<dbReference type="EC" id="7.1.2.2" evidence="1"/>
<dbReference type="EMBL" id="CP000786">
    <property type="protein sequence ID" value="ABZ96935.1"/>
    <property type="molecule type" value="Genomic_DNA"/>
</dbReference>
<dbReference type="RefSeq" id="WP_012387820.1">
    <property type="nucleotide sequence ID" value="NC_010602.1"/>
</dbReference>
<dbReference type="SMR" id="B0SLC8"/>
<dbReference type="STRING" id="456481.LEPBI_I0807"/>
<dbReference type="KEGG" id="lbi:LEPBI_I0807"/>
<dbReference type="HOGENOM" id="CLU_022398_0_2_12"/>
<dbReference type="OrthoDB" id="9801639at2"/>
<dbReference type="BioCyc" id="LBIF456481:LEPBI_RS03960-MONOMER"/>
<dbReference type="Proteomes" id="UP000001847">
    <property type="component" value="Chromosome I"/>
</dbReference>
<dbReference type="GO" id="GO:0005886">
    <property type="term" value="C:plasma membrane"/>
    <property type="evidence" value="ECO:0007669"/>
    <property type="project" value="UniProtKB-SubCell"/>
</dbReference>
<dbReference type="GO" id="GO:0045259">
    <property type="term" value="C:proton-transporting ATP synthase complex"/>
    <property type="evidence" value="ECO:0007669"/>
    <property type="project" value="UniProtKB-KW"/>
</dbReference>
<dbReference type="GO" id="GO:0005524">
    <property type="term" value="F:ATP binding"/>
    <property type="evidence" value="ECO:0007669"/>
    <property type="project" value="UniProtKB-UniRule"/>
</dbReference>
<dbReference type="GO" id="GO:0016887">
    <property type="term" value="F:ATP hydrolysis activity"/>
    <property type="evidence" value="ECO:0007669"/>
    <property type="project" value="InterPro"/>
</dbReference>
<dbReference type="GO" id="GO:0046933">
    <property type="term" value="F:proton-transporting ATP synthase activity, rotational mechanism"/>
    <property type="evidence" value="ECO:0007669"/>
    <property type="project" value="UniProtKB-UniRule"/>
</dbReference>
<dbReference type="CDD" id="cd18110">
    <property type="entry name" value="ATP-synt_F1_beta_C"/>
    <property type="match status" value="1"/>
</dbReference>
<dbReference type="CDD" id="cd18115">
    <property type="entry name" value="ATP-synt_F1_beta_N"/>
    <property type="match status" value="1"/>
</dbReference>
<dbReference type="CDD" id="cd01133">
    <property type="entry name" value="F1-ATPase_beta_CD"/>
    <property type="match status" value="1"/>
</dbReference>
<dbReference type="FunFam" id="1.10.1140.10:FF:000001">
    <property type="entry name" value="ATP synthase subunit beta"/>
    <property type="match status" value="1"/>
</dbReference>
<dbReference type="FunFam" id="2.40.10.170:FF:000005">
    <property type="entry name" value="ATP synthase subunit beta"/>
    <property type="match status" value="1"/>
</dbReference>
<dbReference type="FunFam" id="3.40.50.300:FF:000004">
    <property type="entry name" value="ATP synthase subunit beta"/>
    <property type="match status" value="1"/>
</dbReference>
<dbReference type="Gene3D" id="2.40.10.170">
    <property type="match status" value="1"/>
</dbReference>
<dbReference type="Gene3D" id="1.10.1140.10">
    <property type="entry name" value="Bovine Mitochondrial F1-atpase, Atp Synthase Beta Chain, Chain D, domain 3"/>
    <property type="match status" value="1"/>
</dbReference>
<dbReference type="Gene3D" id="3.40.50.300">
    <property type="entry name" value="P-loop containing nucleotide triphosphate hydrolases"/>
    <property type="match status" value="1"/>
</dbReference>
<dbReference type="HAMAP" id="MF_01347">
    <property type="entry name" value="ATP_synth_beta_bact"/>
    <property type="match status" value="1"/>
</dbReference>
<dbReference type="InterPro" id="IPR003593">
    <property type="entry name" value="AAA+_ATPase"/>
</dbReference>
<dbReference type="InterPro" id="IPR055190">
    <property type="entry name" value="ATP-synt_VA_C"/>
</dbReference>
<dbReference type="InterPro" id="IPR005722">
    <property type="entry name" value="ATP_synth_F1_bsu"/>
</dbReference>
<dbReference type="InterPro" id="IPR020003">
    <property type="entry name" value="ATPase_a/bsu_AS"/>
</dbReference>
<dbReference type="InterPro" id="IPR050053">
    <property type="entry name" value="ATPase_alpha/beta_chains"/>
</dbReference>
<dbReference type="InterPro" id="IPR004100">
    <property type="entry name" value="ATPase_F1/V1/A1_a/bsu_N"/>
</dbReference>
<dbReference type="InterPro" id="IPR036121">
    <property type="entry name" value="ATPase_F1/V1/A1_a/bsu_N_sf"/>
</dbReference>
<dbReference type="InterPro" id="IPR000194">
    <property type="entry name" value="ATPase_F1/V1/A1_a/bsu_nucl-bd"/>
</dbReference>
<dbReference type="InterPro" id="IPR024034">
    <property type="entry name" value="ATPase_F1/V1_b/a_C"/>
</dbReference>
<dbReference type="InterPro" id="IPR027417">
    <property type="entry name" value="P-loop_NTPase"/>
</dbReference>
<dbReference type="NCBIfam" id="TIGR01039">
    <property type="entry name" value="atpD"/>
    <property type="match status" value="1"/>
</dbReference>
<dbReference type="PANTHER" id="PTHR15184">
    <property type="entry name" value="ATP SYNTHASE"/>
    <property type="match status" value="1"/>
</dbReference>
<dbReference type="PANTHER" id="PTHR15184:SF71">
    <property type="entry name" value="ATP SYNTHASE SUBUNIT BETA, MITOCHONDRIAL"/>
    <property type="match status" value="1"/>
</dbReference>
<dbReference type="Pfam" id="PF00006">
    <property type="entry name" value="ATP-synt_ab"/>
    <property type="match status" value="1"/>
</dbReference>
<dbReference type="Pfam" id="PF02874">
    <property type="entry name" value="ATP-synt_ab_N"/>
    <property type="match status" value="1"/>
</dbReference>
<dbReference type="Pfam" id="PF22919">
    <property type="entry name" value="ATP-synt_VA_C"/>
    <property type="match status" value="1"/>
</dbReference>
<dbReference type="SMART" id="SM00382">
    <property type="entry name" value="AAA"/>
    <property type="match status" value="1"/>
</dbReference>
<dbReference type="SUPFAM" id="SSF47917">
    <property type="entry name" value="C-terminal domain of alpha and beta subunits of F1 ATP synthase"/>
    <property type="match status" value="1"/>
</dbReference>
<dbReference type="SUPFAM" id="SSF50615">
    <property type="entry name" value="N-terminal domain of alpha and beta subunits of F1 ATP synthase"/>
    <property type="match status" value="1"/>
</dbReference>
<dbReference type="SUPFAM" id="SSF52540">
    <property type="entry name" value="P-loop containing nucleoside triphosphate hydrolases"/>
    <property type="match status" value="1"/>
</dbReference>
<dbReference type="PROSITE" id="PS00152">
    <property type="entry name" value="ATPASE_ALPHA_BETA"/>
    <property type="match status" value="1"/>
</dbReference>
<protein>
    <recommendedName>
        <fullName evidence="1">ATP synthase subunit beta</fullName>
        <ecNumber evidence="1">7.1.2.2</ecNumber>
    </recommendedName>
    <alternativeName>
        <fullName evidence="1">ATP synthase F1 sector subunit beta</fullName>
    </alternativeName>
    <alternativeName>
        <fullName evidence="1">F-ATPase subunit beta</fullName>
    </alternativeName>
</protein>
<comment type="function">
    <text evidence="1">Produces ATP from ADP in the presence of a proton gradient across the membrane. The catalytic sites are hosted primarily by the beta subunits.</text>
</comment>
<comment type="catalytic activity">
    <reaction evidence="1">
        <text>ATP + H2O + 4 H(+)(in) = ADP + phosphate + 5 H(+)(out)</text>
        <dbReference type="Rhea" id="RHEA:57720"/>
        <dbReference type="ChEBI" id="CHEBI:15377"/>
        <dbReference type="ChEBI" id="CHEBI:15378"/>
        <dbReference type="ChEBI" id="CHEBI:30616"/>
        <dbReference type="ChEBI" id="CHEBI:43474"/>
        <dbReference type="ChEBI" id="CHEBI:456216"/>
        <dbReference type="EC" id="7.1.2.2"/>
    </reaction>
</comment>
<comment type="subunit">
    <text evidence="1">F-type ATPases have 2 components, CF(1) - the catalytic core - and CF(0) - the membrane proton channel. CF(1) has five subunits: alpha(3), beta(3), gamma(1), delta(1), epsilon(1). CF(0) has three main subunits: a(1), b(2) and c(9-12). The alpha and beta chains form an alternating ring which encloses part of the gamma chain. CF(1) is attached to CF(0) by a central stalk formed by the gamma and epsilon chains, while a peripheral stalk is formed by the delta and b chains.</text>
</comment>
<comment type="subcellular location">
    <subcellularLocation>
        <location evidence="1">Cell inner membrane</location>
        <topology evidence="1">Peripheral membrane protein</topology>
    </subcellularLocation>
</comment>
<comment type="similarity">
    <text evidence="1">Belongs to the ATPase alpha/beta chains family.</text>
</comment>
<accession>B0SLC8</accession>
<evidence type="ECO:0000255" key="1">
    <source>
        <dbReference type="HAMAP-Rule" id="MF_01347"/>
    </source>
</evidence>
<reference key="1">
    <citation type="journal article" date="2008" name="PLoS ONE">
        <title>Genome sequence of the saprophyte Leptospira biflexa provides insights into the evolution of Leptospira and the pathogenesis of leptospirosis.</title>
        <authorList>
            <person name="Picardeau M."/>
            <person name="Bulach D.M."/>
            <person name="Bouchier C."/>
            <person name="Zuerner R.L."/>
            <person name="Zidane N."/>
            <person name="Wilson P.J."/>
            <person name="Creno S."/>
            <person name="Kuczek E.S."/>
            <person name="Bommezzadri S."/>
            <person name="Davis J.C."/>
            <person name="McGrath A."/>
            <person name="Johnson M.J."/>
            <person name="Boursaux-Eude C."/>
            <person name="Seemann T."/>
            <person name="Rouy Z."/>
            <person name="Coppel R.L."/>
            <person name="Rood J.I."/>
            <person name="Lajus A."/>
            <person name="Davies J.K."/>
            <person name="Medigue C."/>
            <person name="Adler B."/>
        </authorList>
    </citation>
    <scope>NUCLEOTIDE SEQUENCE [LARGE SCALE GENOMIC DNA]</scope>
    <source>
        <strain>Patoc 1 / ATCC 23582 / Paris</strain>
    </source>
</reference>
<organism>
    <name type="scientific">Leptospira biflexa serovar Patoc (strain Patoc 1 / ATCC 23582 / Paris)</name>
    <dbReference type="NCBI Taxonomy" id="456481"/>
    <lineage>
        <taxon>Bacteria</taxon>
        <taxon>Pseudomonadati</taxon>
        <taxon>Spirochaetota</taxon>
        <taxon>Spirochaetia</taxon>
        <taxon>Leptospirales</taxon>
        <taxon>Leptospiraceae</taxon>
        <taxon>Leptospira</taxon>
    </lineage>
</organism>